<sequence length="425" mass="47816">MDKNIGEQLNKAYEAFRQACMDRDSAVKELQQKTENYEQRIREQQEQLSLQQTIIDKLKSQLLLVNSTQDNNYGCVPLLEDSETRKNNLTLDQPQDKVISGIAREKLPKVRRQEVSSPRKETSARSLGSPLLHERGNIEKTFWDLKEEFHKICMLAKAQKDHLSKLNIPDTATETQCSVPIQCTDKTDKQEALFKPQAKDDINRGAPSITSVTPRGLCRDEEDTSFESLSKFNVKFPPMDNDSTFLHSTPERPGILSPATSEAVCQEKFNMEFRDNPGNFVKTEETLFEIQGIDPIASAIQNLKTTDKTKPSNLVNTCIRTTLDRAACLPPGDHNALYVNSFPLLDPSDAPFPSLDSPGKAIRGPQQPIWKPFPNQDSDSVVLSGTDSELHIPRVCEFCQAVFPPSITSRGDFLRHLNSHFNGET</sequence>
<feature type="chain" id="PRO_0000072427" description="TRAF family member-associated NF-kappa-B activator">
    <location>
        <begin position="1"/>
        <end position="425"/>
    </location>
</feature>
<feature type="zinc finger region" description="UBZ1-type" evidence="3">
    <location>
        <begin position="393"/>
        <end position="420"/>
    </location>
</feature>
<feature type="region of interest" description="Necessary for interaction with ZC3H12A" evidence="11">
    <location>
        <begin position="1"/>
        <end position="31"/>
    </location>
</feature>
<feature type="region of interest" description="Necessary for interaction with TRAF6" evidence="11">
    <location>
        <begin position="70"/>
        <end position="191"/>
    </location>
</feature>
<feature type="region of interest" description="Interaction with TBK1 and IKBKE" evidence="1">
    <location>
        <begin position="133"/>
        <end position="172"/>
    </location>
</feature>
<feature type="region of interest" description="TRAF family member interaction">
    <location>
        <begin position="172"/>
        <end position="191"/>
    </location>
</feature>
<feature type="coiled-coil region" evidence="2">
    <location>
        <begin position="22"/>
        <end position="62"/>
    </location>
</feature>
<feature type="binding site" evidence="3">
    <location>
        <position position="396"/>
    </location>
    <ligand>
        <name>Zn(2+)</name>
        <dbReference type="ChEBI" id="CHEBI:29105"/>
    </ligand>
</feature>
<feature type="binding site" evidence="3">
    <location>
        <position position="399"/>
    </location>
    <ligand>
        <name>Zn(2+)</name>
        <dbReference type="ChEBI" id="CHEBI:29105"/>
    </ligand>
</feature>
<feature type="binding site" evidence="3">
    <location>
        <position position="416"/>
    </location>
    <ligand>
        <name>Zn(2+)</name>
        <dbReference type="ChEBI" id="CHEBI:29105"/>
    </ligand>
</feature>
<feature type="binding site" evidence="3">
    <location>
        <position position="420"/>
    </location>
    <ligand>
        <name>Zn(2+)</name>
        <dbReference type="ChEBI" id="CHEBI:29105"/>
    </ligand>
</feature>
<feature type="site" description="Cleavage by EMCV protease 3C" evidence="12">
    <location>
        <position position="197"/>
    </location>
</feature>
<feature type="site" description="(Microbial infection) Cleavage; by viral Seneca Valley virus protease 3C" evidence="14">
    <location>
        <begin position="272"/>
        <end position="273"/>
    </location>
</feature>
<feature type="site" description="(Microbial infection) Cleavage; by viral Seneca Valley virus protease 3C" evidence="14">
    <location>
        <begin position="291"/>
        <end position="292"/>
    </location>
</feature>
<feature type="site" description="Cleavage by EMCV protease 3C" evidence="12">
    <location>
        <position position="291"/>
    </location>
</feature>
<feature type="modified residue" description="N-acetylmethionine" evidence="22">
    <location>
        <position position="1"/>
    </location>
</feature>
<feature type="modified residue" description="Phosphoserine" evidence="21 23 24">
    <location>
        <position position="126"/>
    </location>
</feature>
<feature type="modified residue" description="Phosphoserine" evidence="19 20 21 23">
    <location>
        <position position="129"/>
    </location>
</feature>
<feature type="modified residue" description="Phosphoserine" evidence="24">
    <location>
        <position position="178"/>
    </location>
</feature>
<feature type="modified residue" description="Phosphoserine" evidence="23 24">
    <location>
        <position position="208"/>
    </location>
</feature>
<feature type="modified residue" description="Phosphothreonine" evidence="23">
    <location>
        <position position="213"/>
    </location>
</feature>
<feature type="modified residue" description="Phosphoserine" evidence="23">
    <location>
        <position position="225"/>
    </location>
</feature>
<feature type="modified residue" description="Phosphoserine" evidence="23">
    <location>
        <position position="228"/>
    </location>
</feature>
<feature type="modified residue" description="Phosphoserine" evidence="21">
    <location>
        <position position="341"/>
    </location>
</feature>
<feature type="modified residue" description="Phosphoserine" evidence="21">
    <location>
        <position position="354"/>
    </location>
</feature>
<feature type="modified residue" description="Phosphoserine" evidence="19 21">
    <location>
        <position position="357"/>
    </location>
</feature>
<feature type="splice variant" id="VSP_043702" description="In isoform 3." evidence="17">
    <original>RRQEVSSPR</original>
    <variation>DIASAESSI</variation>
    <location>
        <begin position="111"/>
        <end position="119"/>
    </location>
</feature>
<feature type="splice variant" id="VSP_004442" description="In isoform Short." evidence="16">
    <original>RRQEVSS</original>
    <variation>DIASAES</variation>
    <location>
        <begin position="111"/>
        <end position="117"/>
    </location>
</feature>
<feature type="splice variant" id="VSP_004443" description="In isoform Short." evidence="16">
    <location>
        <begin position="118"/>
        <end position="425"/>
    </location>
</feature>
<feature type="splice variant" id="VSP_043703" description="In isoform 3." evidence="17">
    <location>
        <begin position="120"/>
        <end position="425"/>
    </location>
</feature>
<feature type="sequence variant" id="VAR_051409" description="In dbSNP:rs10183668.">
    <original>G</original>
    <variation>R</variation>
    <location>
        <position position="292"/>
    </location>
</feature>
<feature type="sequence variant" id="VAR_051410" description="In dbSNP:rs2229759.">
    <original>P</original>
    <variation>L</variation>
    <location>
        <position position="358"/>
    </location>
</feature>
<feature type="sequence variant" id="VAR_051411" description="In dbSNP:rs3769969.">
    <original>R</original>
    <variation>Q</variation>
    <location>
        <position position="394"/>
    </location>
</feature>
<feature type="mutagenesis site" description="Abolishes interaction with TRAF2 and TRAF3." evidence="6">
    <original>Q</original>
    <variation>A</variation>
    <location>
        <position position="182"/>
    </location>
</feature>
<feature type="mutagenesis site" description="Abolishes interaction with TRAF2 and TRAF3." evidence="6">
    <original>T</original>
    <variation>A</variation>
    <location>
        <position position="184"/>
    </location>
</feature>
<feature type="mutagenesis site" description="Abolishes interaction with TRAF2; greatly diminishes interaction with TRAF3." evidence="6">
    <original>D</original>
    <variation>A</variation>
    <location>
        <position position="185"/>
    </location>
</feature>
<feature type="mutagenesis site" description="Diminishes interaction with TRAF2 and TRAF3." evidence="6">
    <original>D</original>
    <variation>A</variation>
    <location>
        <position position="188"/>
    </location>
</feature>
<feature type="mutagenesis site" description="Diminishes interaction with TRAF2 and TRAF3." evidence="6">
    <original>F</original>
    <variation>A</variation>
    <location>
        <position position="194"/>
    </location>
</feature>
<feature type="mutagenesis site" description="No effect on cleavage by Seneca Valley virus protease 3C." evidence="14">
    <original>Q</original>
    <variation>A</variation>
    <location>
        <position position="197"/>
    </location>
</feature>
<feature type="mutagenesis site" description="No effect on cleavage by Seneca Valley virus protease 3C." evidence="14">
    <original>H</original>
    <variation>A</variation>
    <location>
        <position position="247"/>
    </location>
</feature>
<feature type="mutagenesis site" description="No effect on cleavage by Seneca Valley virus protease 3C." evidence="14">
    <original>E</original>
    <variation>A</variation>
    <location>
        <position position="251"/>
    </location>
</feature>
<feature type="mutagenesis site" description="No effect on cleavage by Seneca Valley virus protease 3C." evidence="14">
    <original>E</original>
    <variation>A</variation>
    <location>
        <position position="262"/>
    </location>
</feature>
<feature type="mutagenesis site" description="No effect on cleavage by Seneca Valley virus protease 3C." evidence="14">
    <original>Q</original>
    <variation>A</variation>
    <location>
        <position position="266"/>
    </location>
</feature>
<feature type="mutagenesis site" description="No effect on cleavage by Seneca Valley virus protease 3C." evidence="14">
    <original>E</original>
    <variation>A</variation>
    <location>
        <position position="267"/>
    </location>
</feature>
<feature type="mutagenesis site" description="Complete loss of cleavage by Seneca Valley virus protease 3C." evidence="14">
    <original>E</original>
    <variation>A</variation>
    <location>
        <position position="272"/>
    </location>
</feature>
<feature type="mutagenesis site" description="Complete loss of cleavage by Seneca Valley virus protease 3C." evidence="14">
    <original>Q</original>
    <variation>A</variation>
    <location>
        <position position="291"/>
    </location>
</feature>
<feature type="sequence conflict" description="In Ref. 1; AAC50681." evidence="18" ref="1">
    <original>E</original>
    <variation>D</variation>
    <location>
        <position position="83"/>
    </location>
</feature>
<feature type="sequence conflict" description="In Ref. 1; AAC50681." evidence="18" ref="1">
    <original>N</original>
    <variation>T</variation>
    <location>
        <position position="88"/>
    </location>
</feature>
<feature type="sequence conflict" description="In Ref. 1; AAC50681." evidence="18" ref="1">
    <original>D</original>
    <variation>A</variation>
    <location>
        <position position="92"/>
    </location>
</feature>
<feature type="sequence conflict" description="In Ref. 1; AAC50681." evidence="18" ref="1">
    <original>F</original>
    <variation>S</variation>
    <location>
        <position position="142"/>
    </location>
</feature>
<feature type="sequence conflict" description="In Ref. 1; AAC50681." evidence="18" ref="1">
    <original>K</original>
    <variation>T</variation>
    <location>
        <position position="195"/>
    </location>
</feature>
<feature type="sequence conflict" description="In Ref. 1; AAC50681." evidence="18" ref="1">
    <original>F</original>
    <variation>L</variation>
    <location>
        <position position="226"/>
    </location>
</feature>
<feature type="sequence conflict" description="In Ref. 2; AAC50770." evidence="18" ref="2">
    <original>L</original>
    <variation>P</variation>
    <location>
        <position position="303"/>
    </location>
</feature>
<feature type="strand" evidence="25">
    <location>
        <begin position="191"/>
        <end position="193"/>
    </location>
</feature>
<reference key="1">
    <citation type="journal article" date="1996" name="Proc. Natl. Acad. Sci. U.S.A.">
        <title>I-TRAF is a novel TRAF-interacting protein that regulates TRAF-mediated signal transduction.</title>
        <authorList>
            <person name="Rothe M."/>
            <person name="Xiong J."/>
            <person name="Shu H.-B."/>
            <person name="Williamson K."/>
            <person name="Goddard A."/>
            <person name="Goeddel D.V."/>
        </authorList>
    </citation>
    <scope>NUCLEOTIDE SEQUENCE [MRNA] (ISOFORM LONG)</scope>
</reference>
<reference key="2">
    <citation type="journal article" date="1996" name="Proc. Natl. Acad. Sci. U.S.A.">
        <title>Tumor necrosis factor receptor associated factor 2 is a mediator of NF-kappa B activation by latent infection membrane protein 1, the Epstein-Barr virus transforming protein.</title>
        <authorList>
            <person name="Kaye K.M."/>
            <person name="Devergne O."/>
            <person name="Harada J.N."/>
            <person name="Izumi K.M."/>
            <person name="Yalamanchili R."/>
            <person name="Kieff E."/>
            <person name="Mosialos G."/>
        </authorList>
    </citation>
    <scope>NUCLEOTIDE SEQUENCE [MRNA] (ISOFORM LONG)</scope>
</reference>
<reference key="3">
    <citation type="submission" date="2003-08" db="EMBL/GenBank/DDBJ databases">
        <title>Cloning of human full-length CDSs in BD Creator(TM) system donor vector.</title>
        <authorList>
            <person name="Kalnine N."/>
            <person name="Chen X."/>
            <person name="Rolfs A."/>
            <person name="Halleck A."/>
            <person name="Hines L."/>
            <person name="Eisenstein S."/>
            <person name="Koundinya M."/>
            <person name="Raphael J."/>
            <person name="Moreira D."/>
            <person name="Kelley T."/>
            <person name="LaBaer J."/>
            <person name="Lin Y."/>
            <person name="Phelan M."/>
            <person name="Farmer A."/>
        </authorList>
    </citation>
    <scope>NUCLEOTIDE SEQUENCE [LARGE SCALE MRNA] (ISOFORM 3)</scope>
</reference>
<reference key="4">
    <citation type="journal article" date="2005" name="Nature">
        <title>Generation and annotation of the DNA sequences of human chromosomes 2 and 4.</title>
        <authorList>
            <person name="Hillier L.W."/>
            <person name="Graves T.A."/>
            <person name="Fulton R.S."/>
            <person name="Fulton L.A."/>
            <person name="Pepin K.H."/>
            <person name="Minx P."/>
            <person name="Wagner-McPherson C."/>
            <person name="Layman D."/>
            <person name="Wylie K."/>
            <person name="Sekhon M."/>
            <person name="Becker M.C."/>
            <person name="Fewell G.A."/>
            <person name="Delehaunty K.D."/>
            <person name="Miner T.L."/>
            <person name="Nash W.E."/>
            <person name="Kremitzki C."/>
            <person name="Oddy L."/>
            <person name="Du H."/>
            <person name="Sun H."/>
            <person name="Bradshaw-Cordum H."/>
            <person name="Ali J."/>
            <person name="Carter J."/>
            <person name="Cordes M."/>
            <person name="Harris A."/>
            <person name="Isak A."/>
            <person name="van Brunt A."/>
            <person name="Nguyen C."/>
            <person name="Du F."/>
            <person name="Courtney L."/>
            <person name="Kalicki J."/>
            <person name="Ozersky P."/>
            <person name="Abbott S."/>
            <person name="Armstrong J."/>
            <person name="Belter E.A."/>
            <person name="Caruso L."/>
            <person name="Cedroni M."/>
            <person name="Cotton M."/>
            <person name="Davidson T."/>
            <person name="Desai A."/>
            <person name="Elliott G."/>
            <person name="Erb T."/>
            <person name="Fronick C."/>
            <person name="Gaige T."/>
            <person name="Haakenson W."/>
            <person name="Haglund K."/>
            <person name="Holmes A."/>
            <person name="Harkins R."/>
            <person name="Kim K."/>
            <person name="Kruchowski S.S."/>
            <person name="Strong C.M."/>
            <person name="Grewal N."/>
            <person name="Goyea E."/>
            <person name="Hou S."/>
            <person name="Levy A."/>
            <person name="Martinka S."/>
            <person name="Mead K."/>
            <person name="McLellan M.D."/>
            <person name="Meyer R."/>
            <person name="Randall-Maher J."/>
            <person name="Tomlinson C."/>
            <person name="Dauphin-Kohlberg S."/>
            <person name="Kozlowicz-Reilly A."/>
            <person name="Shah N."/>
            <person name="Swearengen-Shahid S."/>
            <person name="Snider J."/>
            <person name="Strong J.T."/>
            <person name="Thompson J."/>
            <person name="Yoakum M."/>
            <person name="Leonard S."/>
            <person name="Pearman C."/>
            <person name="Trani L."/>
            <person name="Radionenko M."/>
            <person name="Waligorski J.E."/>
            <person name="Wang C."/>
            <person name="Rock S.M."/>
            <person name="Tin-Wollam A.-M."/>
            <person name="Maupin R."/>
            <person name="Latreille P."/>
            <person name="Wendl M.C."/>
            <person name="Yang S.-P."/>
            <person name="Pohl C."/>
            <person name="Wallis J.W."/>
            <person name="Spieth J."/>
            <person name="Bieri T.A."/>
            <person name="Berkowicz N."/>
            <person name="Nelson J.O."/>
            <person name="Osborne J."/>
            <person name="Ding L."/>
            <person name="Meyer R."/>
            <person name="Sabo A."/>
            <person name="Shotland Y."/>
            <person name="Sinha P."/>
            <person name="Wohldmann P.E."/>
            <person name="Cook L.L."/>
            <person name="Hickenbotham M.T."/>
            <person name="Eldred J."/>
            <person name="Williams D."/>
            <person name="Jones T.A."/>
            <person name="She X."/>
            <person name="Ciccarelli F.D."/>
            <person name="Izaurralde E."/>
            <person name="Taylor J."/>
            <person name="Schmutz J."/>
            <person name="Myers R.M."/>
            <person name="Cox D.R."/>
            <person name="Huang X."/>
            <person name="McPherson J.D."/>
            <person name="Mardis E.R."/>
            <person name="Clifton S.W."/>
            <person name="Warren W.C."/>
            <person name="Chinwalla A.T."/>
            <person name="Eddy S.R."/>
            <person name="Marra M.A."/>
            <person name="Ovcharenko I."/>
            <person name="Furey T.S."/>
            <person name="Miller W."/>
            <person name="Eichler E.E."/>
            <person name="Bork P."/>
            <person name="Suyama M."/>
            <person name="Torrents D."/>
            <person name="Waterston R.H."/>
            <person name="Wilson R.K."/>
        </authorList>
    </citation>
    <scope>NUCLEOTIDE SEQUENCE [LARGE SCALE GENOMIC DNA]</scope>
</reference>
<reference key="5">
    <citation type="submission" date="2005-09" db="EMBL/GenBank/DDBJ databases">
        <authorList>
            <person name="Mural R.J."/>
            <person name="Istrail S."/>
            <person name="Sutton G.G."/>
            <person name="Florea L."/>
            <person name="Halpern A.L."/>
            <person name="Mobarry C.M."/>
            <person name="Lippert R."/>
            <person name="Walenz B."/>
            <person name="Shatkay H."/>
            <person name="Dew I."/>
            <person name="Miller J.R."/>
            <person name="Flanigan M.J."/>
            <person name="Edwards N.J."/>
            <person name="Bolanos R."/>
            <person name="Fasulo D."/>
            <person name="Halldorsson B.V."/>
            <person name="Hannenhalli S."/>
            <person name="Turner R."/>
            <person name="Yooseph S."/>
            <person name="Lu F."/>
            <person name="Nusskern D.R."/>
            <person name="Shue B.C."/>
            <person name="Zheng X.H."/>
            <person name="Zhong F."/>
            <person name="Delcher A.L."/>
            <person name="Huson D.H."/>
            <person name="Kravitz S.A."/>
            <person name="Mouchard L."/>
            <person name="Reinert K."/>
            <person name="Remington K.A."/>
            <person name="Clark A.G."/>
            <person name="Waterman M.S."/>
            <person name="Eichler E.E."/>
            <person name="Adams M.D."/>
            <person name="Hunkapiller M.W."/>
            <person name="Myers E.W."/>
            <person name="Venter J.C."/>
        </authorList>
    </citation>
    <scope>NUCLEOTIDE SEQUENCE [LARGE SCALE GENOMIC DNA]</scope>
</reference>
<reference key="6">
    <citation type="journal article" date="2004" name="Genome Res.">
        <title>The status, quality, and expansion of the NIH full-length cDNA project: the Mammalian Gene Collection (MGC).</title>
        <authorList>
            <consortium name="The MGC Project Team"/>
        </authorList>
    </citation>
    <scope>NUCLEOTIDE SEQUENCE [LARGE SCALE MRNA] (ISOFORM SHORT)</scope>
    <source>
        <tissue>Placenta</tissue>
    </source>
</reference>
<reference key="7">
    <citation type="journal article" date="1999" name="EMBO J.">
        <title>NF-kB activation by a signaling complex containing TRAF2, TANK, and TBK1, a novel IKK-related kinase.</title>
        <authorList>
            <person name="Pomerantz J.L."/>
            <person name="Baltimore D."/>
        </authorList>
    </citation>
    <scope>INTERACTION WITH TBK1</scope>
    <source>
        <tissue>Spleen</tissue>
    </source>
</reference>
<reference key="8">
    <citation type="journal article" date="2000" name="Genes Cells">
        <title>NF-kappaB activation through IKK-i-dependent I-TRAF/TANK phosphorylation.</title>
        <authorList>
            <person name="Nomura F."/>
            <person name="Kawai T."/>
            <person name="Nakanishi K."/>
            <person name="Akira S."/>
        </authorList>
    </citation>
    <scope>INTERACTION WITH TRAF2</scope>
    <scope>PHOSPHORYLATION BY IKBKE</scope>
</reference>
<reference key="9">
    <citation type="journal article" date="2002" name="J. Biol. Chem.">
        <title>Association of the adaptor TANK with the I kappa B kinase (IKK) regulator NEMO connects IKK complexes with IKK epsilon and TBK1 kinases.</title>
        <authorList>
            <person name="Chariot A."/>
            <person name="Leonardi A."/>
            <person name="Muller J."/>
            <person name="Bonif M."/>
            <person name="Brown K."/>
            <person name="Siebenlist U."/>
        </authorList>
    </citation>
    <scope>FUNCTION</scope>
    <scope>INTERACTION WITH IKBKG AND IKBKB</scope>
</reference>
<reference key="10">
    <citation type="journal article" date="2007" name="EMBO J.">
        <title>SINTBAD, a novel component of innate antiviral immunity, shares a TBK1-binding domain with NAP1 and TANK.</title>
        <authorList>
            <person name="Ryzhakov G."/>
            <person name="Randow F."/>
        </authorList>
    </citation>
    <scope>INTERACTION WITH IKBKE</scope>
</reference>
<reference key="11">
    <citation type="journal article" date="2008" name="Mol. Cell">
        <title>Kinase-selective enrichment enables quantitative phosphoproteomics of the kinome across the cell cycle.</title>
        <authorList>
            <person name="Daub H."/>
            <person name="Olsen J.V."/>
            <person name="Bairlein M."/>
            <person name="Gnad F."/>
            <person name="Oppermann F.S."/>
            <person name="Korner R."/>
            <person name="Greff Z."/>
            <person name="Keri G."/>
            <person name="Stemmann O."/>
            <person name="Mann M."/>
        </authorList>
    </citation>
    <scope>PHOSPHORYLATION [LARGE SCALE ANALYSIS] AT SER-129</scope>
    <scope>IDENTIFICATION BY MASS SPECTROMETRY [LARGE SCALE ANALYSIS]</scope>
    <source>
        <tissue>Cervix carcinoma</tissue>
    </source>
</reference>
<reference key="12">
    <citation type="journal article" date="2008" name="Proc. Natl. Acad. Sci. U.S.A.">
        <title>A quantitative atlas of mitotic phosphorylation.</title>
        <authorList>
            <person name="Dephoure N."/>
            <person name="Zhou C."/>
            <person name="Villen J."/>
            <person name="Beausoleil S.A."/>
            <person name="Bakalarski C.E."/>
            <person name="Elledge S.J."/>
            <person name="Gygi S.P."/>
        </authorList>
    </citation>
    <scope>PHOSPHORYLATION [LARGE SCALE ANALYSIS] AT SER-129 AND SER-357</scope>
    <scope>IDENTIFICATION BY MASS SPECTROMETRY [LARGE SCALE ANALYSIS]</scope>
    <source>
        <tissue>Cervix carcinoma</tissue>
    </source>
</reference>
<reference key="13">
    <citation type="journal article" date="2009" name="Mol. Cell. Proteomics">
        <title>Large-scale proteomics analysis of the human kinome.</title>
        <authorList>
            <person name="Oppermann F.S."/>
            <person name="Gnad F."/>
            <person name="Olsen J.V."/>
            <person name="Hornberger R."/>
            <person name="Greff Z."/>
            <person name="Keri G."/>
            <person name="Mann M."/>
            <person name="Daub H."/>
        </authorList>
    </citation>
    <scope>PHOSPHORYLATION [LARGE SCALE ANALYSIS] AT SER-126; SER-129; SER-341; SER-354 AND SER-357</scope>
    <scope>IDENTIFICATION BY MASS SPECTROMETRY [LARGE SCALE ANALYSIS]</scope>
</reference>
<reference key="14">
    <citation type="journal article" date="2010" name="Sci. Signal.">
        <title>Quantitative phosphoproteomics reveals widespread full phosphorylation site occupancy during mitosis.</title>
        <authorList>
            <person name="Olsen J.V."/>
            <person name="Vermeulen M."/>
            <person name="Santamaria A."/>
            <person name="Kumar C."/>
            <person name="Miller M.L."/>
            <person name="Jensen L.J."/>
            <person name="Gnad F."/>
            <person name="Cox J."/>
            <person name="Jensen T.S."/>
            <person name="Nigg E.A."/>
            <person name="Brunak S."/>
            <person name="Mann M."/>
        </authorList>
    </citation>
    <scope>IDENTIFICATION BY MASS SPECTROMETRY [LARGE SCALE ANALYSIS]</scope>
    <source>
        <tissue>Cervix carcinoma</tissue>
    </source>
</reference>
<reference key="15">
    <citation type="journal article" date="2011" name="PLoS ONE">
        <title>Functional dissection of the TBK1 molecular network.</title>
        <authorList>
            <person name="Goncalves A."/>
            <person name="Burckstummer T."/>
            <person name="Dixit E."/>
            <person name="Scheicher R."/>
            <person name="Gorna M.W."/>
            <person name="Karayel E."/>
            <person name="Sugar C."/>
            <person name="Stukalov A."/>
            <person name="Berg T."/>
            <person name="Kralovics R."/>
            <person name="Planyavsky M."/>
            <person name="Bennett K.L."/>
            <person name="Colinge J."/>
            <person name="Superti-Furga G."/>
        </authorList>
    </citation>
    <scope>FUNCTION</scope>
    <scope>INTERACTION WITH TBK1</scope>
</reference>
<reference key="16">
    <citation type="journal article" date="2011" name="PLoS Pathog.">
        <title>Vaccinia virus protein C6 is a virulence factor that binds TBK-1 adaptor proteins and inhibits activation of IRF3 and IRF7.</title>
        <authorList>
            <person name="Unterholzner L."/>
            <person name="Sumner R.P."/>
            <person name="Baran M."/>
            <person name="Ren H."/>
            <person name="Mansur D.S."/>
            <person name="Bourke N.M."/>
            <person name="Randow F."/>
            <person name="Smith G.L."/>
            <person name="Bowie A.G."/>
        </authorList>
    </citation>
    <scope>INTERACTION WITH VACCINIA VIRUS PROTEIN C6 (MICROBIAL INFECTION)</scope>
</reference>
<reference key="17">
    <citation type="journal article" date="2012" name="Proc. Natl. Acad. Sci. U.S.A.">
        <title>N-terminal acetylome analyses and functional insights of the N-terminal acetyltransferase NatB.</title>
        <authorList>
            <person name="Van Damme P."/>
            <person name="Lasa M."/>
            <person name="Polevoda B."/>
            <person name="Gazquez C."/>
            <person name="Elosegui-Artola A."/>
            <person name="Kim D.S."/>
            <person name="De Juan-Pardo E."/>
            <person name="Demeyer K."/>
            <person name="Hole K."/>
            <person name="Larrea E."/>
            <person name="Timmerman E."/>
            <person name="Prieto J."/>
            <person name="Arnesen T."/>
            <person name="Sherman F."/>
            <person name="Gevaert K."/>
            <person name="Aldabe R."/>
        </authorList>
    </citation>
    <scope>ACETYLATION [LARGE SCALE ANALYSIS] AT MET-1</scope>
    <scope>IDENTIFICATION BY MASS SPECTROMETRY [LARGE SCALE ANALYSIS]</scope>
</reference>
<reference key="18">
    <citation type="journal article" date="2013" name="J. Proteome Res.">
        <title>Toward a comprehensive characterization of a human cancer cell phosphoproteome.</title>
        <authorList>
            <person name="Zhou H."/>
            <person name="Di Palma S."/>
            <person name="Preisinger C."/>
            <person name="Peng M."/>
            <person name="Polat A.N."/>
            <person name="Heck A.J."/>
            <person name="Mohammed S."/>
        </authorList>
    </citation>
    <scope>PHOSPHORYLATION [LARGE SCALE ANALYSIS] AT SER-126; SER-129; SER-208; THR-213; SER-225 AND SER-228</scope>
    <scope>IDENTIFICATION BY MASS SPECTROMETRY [LARGE SCALE ANALYSIS]</scope>
    <source>
        <tissue>Cervix carcinoma</tissue>
        <tissue>Erythroleukemia</tissue>
    </source>
</reference>
<reference key="19">
    <citation type="journal article" date="2014" name="J. Proteomics">
        <title>An enzyme assisted RP-RPLC approach for in-depth analysis of human liver phosphoproteome.</title>
        <authorList>
            <person name="Bian Y."/>
            <person name="Song C."/>
            <person name="Cheng K."/>
            <person name="Dong M."/>
            <person name="Wang F."/>
            <person name="Huang J."/>
            <person name="Sun D."/>
            <person name="Wang L."/>
            <person name="Ye M."/>
            <person name="Zou H."/>
        </authorList>
    </citation>
    <scope>PHOSPHORYLATION [LARGE SCALE ANALYSIS] AT SER-126; SER-178 AND SER-208</scope>
    <scope>IDENTIFICATION BY MASS SPECTROMETRY [LARGE SCALE ANALYSIS]</scope>
    <source>
        <tissue>Liver</tissue>
    </source>
</reference>
<reference key="20">
    <citation type="journal article" date="2015" name="J. Biol. Chem.">
        <title>TRAF family member-associated NF-kappaB activator (TANK) inhibits genotoxic nuclear factor kappaB activation by facilitating deubiquitinase USP10-dependent deubiquitination of TRAF6 ligase.</title>
        <authorList>
            <person name="Wang W."/>
            <person name="Huang X."/>
            <person name="Xin H.B."/>
            <person name="Fu M."/>
            <person name="Xue A."/>
            <person name="Wu Z.H."/>
        </authorList>
    </citation>
    <scope>FUNCTION</scope>
    <scope>IDENTIFICATION IN A DEUBIQUITINATION COMPLEX WITH USP10 AND ZC3H12A</scope>
    <scope>INTERACTION WITH IKBKG; TRAF6; USP10 AND ZC3H12A</scope>
</reference>
<reference key="21">
    <citation type="journal article" date="2015" name="J. Biol. Chem.">
        <title>Encephalomyocarditis Virus 3C Protease Relieves TRAF Family Member-associated NF-kappaB Activator (TANK) Inhibitory Effect on TRAF6-mediated NF-kappaB Signaling through Cleavage of TANK.</title>
        <authorList>
            <person name="Huang L."/>
            <person name="Liu Q."/>
            <person name="Zhang L."/>
            <person name="Zhang Q."/>
            <person name="Hu L."/>
            <person name="Li C."/>
            <person name="Wang S."/>
            <person name="Li J."/>
            <person name="Zhang Y."/>
            <person name="Yu H."/>
            <person name="Wang Y."/>
            <person name="Zhong Z."/>
            <person name="Xiong T."/>
            <person name="Xia X."/>
            <person name="Wang X."/>
            <person name="Yu L."/>
            <person name="Deng G."/>
            <person name="Cai X."/>
            <person name="Cui S."/>
            <person name="Weng C."/>
        </authorList>
    </citation>
    <scope>PROTEOLYTIC CLEAVAGE BY ENCEPHALOMYOCARDITIS VIRUS PROTEASE 3C (MICROBIAL INFECTION)</scope>
</reference>
<reference key="22">
    <citation type="journal article" date="2017" name="Biochem. J.">
        <title>Encephalomyocarditis virus 3C protease attenuates type I interferon production through disrupting the TANK-TBK1-IKKepsilon-IRF3 complex.</title>
        <authorList>
            <person name="Huang L."/>
            <person name="Xiong T."/>
            <person name="Yu H."/>
            <person name="Zhang Q."/>
            <person name="Zhang K."/>
            <person name="Li C."/>
            <person name="Hu L."/>
            <person name="Zhang Y."/>
            <person name="Zhang L."/>
            <person name="Liu Q."/>
            <person name="Wang S."/>
            <person name="He X."/>
            <person name="Bu Z."/>
            <person name="Cai X."/>
            <person name="Cui S."/>
            <person name="Li J."/>
            <person name="Weng C."/>
        </authorList>
    </citation>
    <scope>PROTEOLYTIC CLEAVAGE BY ENCEPHALOMYOCARDITIS VIRUS PROTEASE 3C (MICROBIAL INFECTION)</scope>
</reference>
<reference key="23">
    <citation type="journal article" date="2017" name="J. Virol.">
        <title>Seneca Valley virus suppresses host type I interferon production by targeting adaptor proteins MAVS, TRIF, and TANK for cleavage.</title>
        <authorList>
            <person name="Qian S."/>
            <person name="Fan W."/>
            <person name="Liu T."/>
            <person name="Wu M."/>
            <person name="Zhang H."/>
            <person name="Cui X."/>
            <person name="Zhou Y."/>
            <person name="Hu J."/>
            <person name="Wei S."/>
            <person name="Chen H."/>
            <person name="Li X."/>
            <person name="Qian P."/>
        </authorList>
    </citation>
    <scope>INTERACTION WITH SENECA VALLEY VIRUS PROTEASE 3C (MICROBIAL INFECTION)</scope>
    <scope>PROTEOLYTIC CLEAVAGE (MICROBIAL INFECTION)</scope>
    <scope>MUTAGENESIS OF GLN-197; HIS-247; GLU-251; GLU-262; GLN-266; GLU-267; GLU-272 AND GLN-291</scope>
</reference>
<reference key="24">
    <citation type="journal article" date="2018" name="Proteomics">
        <title>Quantitative Proteomics Identified TTC4 as a TBK1 Interactor and a Positive Regulator of SeV-Induced Innate Immunity.</title>
        <authorList>
            <person name="Shang J."/>
            <person name="Xia T."/>
            <person name="Han Q.Q."/>
            <person name="Zhao X."/>
            <person name="Hu M.M."/>
            <person name="Shu H.B."/>
            <person name="Guo L."/>
        </authorList>
    </citation>
    <scope>INTERACTION WITH TBK1</scope>
</reference>
<reference key="25">
    <citation type="journal article" date="2002" name="Structure">
        <title>Downstream regulator TANK binds to the CD40 recognition site on TRAF3.</title>
        <authorList>
            <person name="Li C."/>
            <person name="Ni C.Z."/>
            <person name="Havert M.L."/>
            <person name="Cabezas E."/>
            <person name="He J."/>
            <person name="Kaiser D."/>
            <person name="Reed J.C."/>
            <person name="Satterthwait A.C."/>
            <person name="Cheng G."/>
            <person name="Ely K.R."/>
        </authorList>
    </citation>
    <scope>X-RAY CRYSTALLOGRAPHY (2.9 ANGSTROMS) OF 174-194 IN COMPLEX WITH TRAF3</scope>
    <scope>MUTAGENESIS OF GLN-182; THR-184; ASP-185; ASP-188 AND PHE-194</scope>
</reference>
<accession>Q92844</accession>
<accession>D3DPB5</accession>
<accession>Q7Z4J6</accession>
<accession>Q92885</accession>
<evidence type="ECO:0000250" key="1"/>
<evidence type="ECO:0000255" key="2"/>
<evidence type="ECO:0000255" key="3">
    <source>
        <dbReference type="PROSITE-ProRule" id="PRU01253"/>
    </source>
</evidence>
<evidence type="ECO:0000269" key="4">
    <source>
    </source>
</evidence>
<evidence type="ECO:0000269" key="5">
    <source>
    </source>
</evidence>
<evidence type="ECO:0000269" key="6">
    <source>
    </source>
</evidence>
<evidence type="ECO:0000269" key="7">
    <source>
    </source>
</evidence>
<evidence type="ECO:0000269" key="8">
    <source>
    </source>
</evidence>
<evidence type="ECO:0000269" key="9">
    <source>
    </source>
</evidence>
<evidence type="ECO:0000269" key="10">
    <source>
    </source>
</evidence>
<evidence type="ECO:0000269" key="11">
    <source>
    </source>
</evidence>
<evidence type="ECO:0000269" key="12">
    <source>
    </source>
</evidence>
<evidence type="ECO:0000269" key="13">
    <source>
    </source>
</evidence>
<evidence type="ECO:0000269" key="14">
    <source>
    </source>
</evidence>
<evidence type="ECO:0000269" key="15">
    <source>
    </source>
</evidence>
<evidence type="ECO:0000303" key="16">
    <source>
    </source>
</evidence>
<evidence type="ECO:0000303" key="17">
    <source ref="3"/>
</evidence>
<evidence type="ECO:0000305" key="18"/>
<evidence type="ECO:0007744" key="19">
    <source>
    </source>
</evidence>
<evidence type="ECO:0007744" key="20">
    <source>
    </source>
</evidence>
<evidence type="ECO:0007744" key="21">
    <source>
    </source>
</evidence>
<evidence type="ECO:0007744" key="22">
    <source>
    </source>
</evidence>
<evidence type="ECO:0007744" key="23">
    <source>
    </source>
</evidence>
<evidence type="ECO:0007744" key="24">
    <source>
    </source>
</evidence>
<evidence type="ECO:0007829" key="25">
    <source>
        <dbReference type="PDB" id="1L0A"/>
    </source>
</evidence>
<proteinExistence type="evidence at protein level"/>
<name>TANK_HUMAN</name>
<dbReference type="EMBL" id="U59863">
    <property type="protein sequence ID" value="AAC50681.1"/>
    <property type="molecule type" value="mRNA"/>
</dbReference>
<dbReference type="EMBL" id="U63830">
    <property type="protein sequence ID" value="AAC50770.1"/>
    <property type="molecule type" value="mRNA"/>
</dbReference>
<dbReference type="EMBL" id="BT009855">
    <property type="protein sequence ID" value="AAP88857.1"/>
    <property type="molecule type" value="mRNA"/>
</dbReference>
<dbReference type="EMBL" id="AC009299">
    <property type="status" value="NOT_ANNOTATED_CDS"/>
    <property type="molecule type" value="Genomic_DNA"/>
</dbReference>
<dbReference type="EMBL" id="AC009313">
    <property type="status" value="NOT_ANNOTATED_CDS"/>
    <property type="molecule type" value="Genomic_DNA"/>
</dbReference>
<dbReference type="EMBL" id="CH471058">
    <property type="protein sequence ID" value="EAX11374.1"/>
    <property type="molecule type" value="Genomic_DNA"/>
</dbReference>
<dbReference type="EMBL" id="CH471058">
    <property type="protein sequence ID" value="EAX11375.1"/>
    <property type="molecule type" value="Genomic_DNA"/>
</dbReference>
<dbReference type="EMBL" id="CH471058">
    <property type="protein sequence ID" value="EAX11377.1"/>
    <property type="molecule type" value="Genomic_DNA"/>
</dbReference>
<dbReference type="EMBL" id="BC003388">
    <property type="protein sequence ID" value="AAH03388.1"/>
    <property type="molecule type" value="mRNA"/>
</dbReference>
<dbReference type="CCDS" id="CCDS2215.1">
    <molecule id="Q92844-1"/>
</dbReference>
<dbReference type="CCDS" id="CCDS46436.1">
    <molecule id="Q92844-3"/>
</dbReference>
<dbReference type="RefSeq" id="NP_001186064.1">
    <molecule id="Q92844-1"/>
    <property type="nucleotide sequence ID" value="NM_001199135.3"/>
</dbReference>
<dbReference type="RefSeq" id="NP_004171.2">
    <molecule id="Q92844-1"/>
    <property type="nucleotide sequence ID" value="NM_004180.2"/>
</dbReference>
<dbReference type="RefSeq" id="NP_597841.1">
    <molecule id="Q92844-3"/>
    <property type="nucleotide sequence ID" value="NM_133484.2"/>
</dbReference>
<dbReference type="RefSeq" id="XP_016858585.1">
    <property type="nucleotide sequence ID" value="XM_017003096.1"/>
</dbReference>
<dbReference type="RefSeq" id="XP_016858586.1">
    <property type="nucleotide sequence ID" value="XM_017003097.1"/>
</dbReference>
<dbReference type="RefSeq" id="XP_047297777.1">
    <molecule id="Q92844-1"/>
    <property type="nucleotide sequence ID" value="XM_047441821.1"/>
</dbReference>
<dbReference type="RefSeq" id="XP_054196019.1">
    <molecule id="Q92844-1"/>
    <property type="nucleotide sequence ID" value="XM_054340044.1"/>
</dbReference>
<dbReference type="PDB" id="1KZZ">
    <property type="method" value="X-ray"/>
    <property type="resolution" value="3.50 A"/>
    <property type="chains" value="B=177-187"/>
</dbReference>
<dbReference type="PDB" id="1L0A">
    <property type="method" value="X-ray"/>
    <property type="resolution" value="2.90 A"/>
    <property type="chains" value="B=178-195"/>
</dbReference>
<dbReference type="PDB" id="5H10">
    <property type="method" value="X-ray"/>
    <property type="resolution" value="3.21 A"/>
    <property type="chains" value="D/E/F=178-185"/>
</dbReference>
<dbReference type="PDBsum" id="1KZZ"/>
<dbReference type="PDBsum" id="1L0A"/>
<dbReference type="PDBsum" id="5H10"/>
<dbReference type="SMR" id="Q92844"/>
<dbReference type="BioGRID" id="115328">
    <property type="interactions" value="218"/>
</dbReference>
<dbReference type="ComplexPortal" id="CPX-6089">
    <property type="entry name" value="TBK1-IKKepsilon-TANK complex"/>
</dbReference>
<dbReference type="CORUM" id="Q92844"/>
<dbReference type="DIP" id="DIP-27516N"/>
<dbReference type="FunCoup" id="Q92844">
    <property type="interactions" value="1024"/>
</dbReference>
<dbReference type="IntAct" id="Q92844">
    <property type="interactions" value="201"/>
</dbReference>
<dbReference type="MINT" id="Q92844"/>
<dbReference type="STRING" id="9606.ENSP00000259075"/>
<dbReference type="ChEMBL" id="CHEMBL4523420"/>
<dbReference type="GlyCosmos" id="Q92844">
    <property type="glycosylation" value="2 sites, 1 glycan"/>
</dbReference>
<dbReference type="GlyGen" id="Q92844">
    <property type="glycosylation" value="2 sites, 1 O-linked glycan (2 sites)"/>
</dbReference>
<dbReference type="iPTMnet" id="Q92844"/>
<dbReference type="PhosphoSitePlus" id="Q92844"/>
<dbReference type="BioMuta" id="TANK"/>
<dbReference type="DMDM" id="143811466"/>
<dbReference type="jPOST" id="Q92844"/>
<dbReference type="MassIVE" id="Q92844"/>
<dbReference type="PaxDb" id="9606-ENSP00000376505"/>
<dbReference type="PeptideAtlas" id="Q92844"/>
<dbReference type="ProteomicsDB" id="75537">
    <molecule id="Q92844-1"/>
</dbReference>
<dbReference type="ProteomicsDB" id="75538">
    <molecule id="Q92844-2"/>
</dbReference>
<dbReference type="ProteomicsDB" id="75539">
    <molecule id="Q92844-3"/>
</dbReference>
<dbReference type="Pumba" id="Q92844"/>
<dbReference type="Antibodypedia" id="4155">
    <property type="antibodies" value="473 antibodies from 38 providers"/>
</dbReference>
<dbReference type="DNASU" id="10010"/>
<dbReference type="Ensembl" id="ENST00000259075.6">
    <molecule id="Q92844-1"/>
    <property type="protein sequence ID" value="ENSP00000259075.2"/>
    <property type="gene ID" value="ENSG00000136560.14"/>
</dbReference>
<dbReference type="Ensembl" id="ENST00000392749.7">
    <molecule id="Q92844-1"/>
    <property type="protein sequence ID" value="ENSP00000376505.2"/>
    <property type="gene ID" value="ENSG00000136560.14"/>
</dbReference>
<dbReference type="Ensembl" id="ENST00000403609.1">
    <molecule id="Q92844-3"/>
    <property type="protein sequence ID" value="ENSP00000385983.1"/>
    <property type="gene ID" value="ENSG00000136560.14"/>
</dbReference>
<dbReference type="GeneID" id="10010"/>
<dbReference type="KEGG" id="hsa:10010"/>
<dbReference type="MANE-Select" id="ENST00000392749.7">
    <property type="protein sequence ID" value="ENSP00000376505.2"/>
    <property type="RefSeq nucleotide sequence ID" value="NM_001199135.3"/>
    <property type="RefSeq protein sequence ID" value="NP_001186064.1"/>
</dbReference>
<dbReference type="UCSC" id="uc002ubr.3">
    <molecule id="Q92844-1"/>
    <property type="organism name" value="human"/>
</dbReference>
<dbReference type="AGR" id="HGNC:11562"/>
<dbReference type="CTD" id="10010"/>
<dbReference type="DisGeNET" id="10010"/>
<dbReference type="GeneCards" id="TANK"/>
<dbReference type="HGNC" id="HGNC:11562">
    <property type="gene designation" value="TANK"/>
</dbReference>
<dbReference type="HPA" id="ENSG00000136560">
    <property type="expression patterns" value="Low tissue specificity"/>
</dbReference>
<dbReference type="MIM" id="603893">
    <property type="type" value="gene"/>
</dbReference>
<dbReference type="neXtProt" id="NX_Q92844"/>
<dbReference type="OpenTargets" id="ENSG00000136560"/>
<dbReference type="PharmGKB" id="PA36330"/>
<dbReference type="VEuPathDB" id="HostDB:ENSG00000136560"/>
<dbReference type="eggNOG" id="ENOG502QRM3">
    <property type="taxonomic scope" value="Eukaryota"/>
</dbReference>
<dbReference type="GeneTree" id="ENSGT00390000008712"/>
<dbReference type="HOGENOM" id="CLU_053153_0_0_1"/>
<dbReference type="InParanoid" id="Q92844"/>
<dbReference type="OMA" id="IWQPQDN"/>
<dbReference type="OrthoDB" id="9937252at2759"/>
<dbReference type="PAN-GO" id="Q92844">
    <property type="GO annotations" value="1 GO annotation based on evolutionary models"/>
</dbReference>
<dbReference type="PhylomeDB" id="Q92844"/>
<dbReference type="TreeFam" id="TF336453"/>
<dbReference type="PathwayCommons" id="Q92844"/>
<dbReference type="Reactome" id="R-HSA-9013973">
    <property type="pathway name" value="TICAM1-dependent activation of IRF3/IRF7"/>
</dbReference>
<dbReference type="Reactome" id="R-HSA-933541">
    <property type="pathway name" value="TRAF6 mediated IRF7 activation"/>
</dbReference>
<dbReference type="Reactome" id="R-HSA-936964">
    <property type="pathway name" value="Activation of IRF3, IRF7 mediated by TBK1, IKKEpsilon (IKBKE)"/>
</dbReference>
<dbReference type="Reactome" id="R-HSA-9824878">
    <property type="pathway name" value="Regulation of TBK1, IKKEpsilon (IKBKE)-mediated activation of IRF3, IRF7"/>
</dbReference>
<dbReference type="Reactome" id="R-HSA-9828211">
    <property type="pathway name" value="Regulation of TBK1, IKKEpsilon-mediated activation of IRF3, IRF7 upon TLR3 ligation"/>
</dbReference>
<dbReference type="SignaLink" id="Q92844"/>
<dbReference type="SIGNOR" id="Q92844"/>
<dbReference type="BioGRID-ORCS" id="10010">
    <property type="hits" value="22 hits in 1158 CRISPR screens"/>
</dbReference>
<dbReference type="ChiTaRS" id="TANK">
    <property type="organism name" value="human"/>
</dbReference>
<dbReference type="EvolutionaryTrace" id="Q92844"/>
<dbReference type="GeneWiki" id="TANK_(gene)"/>
<dbReference type="GenomeRNAi" id="10010"/>
<dbReference type="Pharos" id="Q92844">
    <property type="development level" value="Tbio"/>
</dbReference>
<dbReference type="PRO" id="PR:Q92844"/>
<dbReference type="Proteomes" id="UP000005640">
    <property type="component" value="Chromosome 2"/>
</dbReference>
<dbReference type="RNAct" id="Q92844">
    <property type="molecule type" value="protein"/>
</dbReference>
<dbReference type="Bgee" id="ENSG00000136560">
    <property type="expression patterns" value="Expressed in monocyte and 205 other cell types or tissues"/>
</dbReference>
<dbReference type="ExpressionAtlas" id="Q92844">
    <property type="expression patterns" value="baseline and differential"/>
</dbReference>
<dbReference type="GO" id="GO:0005737">
    <property type="term" value="C:cytoplasm"/>
    <property type="evidence" value="ECO:0000314"/>
    <property type="project" value="UniProt"/>
</dbReference>
<dbReference type="GO" id="GO:0005829">
    <property type="term" value="C:cytosol"/>
    <property type="evidence" value="ECO:0000314"/>
    <property type="project" value="HPA"/>
</dbReference>
<dbReference type="GO" id="GO:0032991">
    <property type="term" value="C:protein-containing complex"/>
    <property type="evidence" value="ECO:0000314"/>
    <property type="project" value="UniProtKB"/>
</dbReference>
<dbReference type="GO" id="GO:1902554">
    <property type="term" value="C:serine/threonine protein kinase complex"/>
    <property type="evidence" value="ECO:0000303"/>
    <property type="project" value="ComplexPortal"/>
</dbReference>
<dbReference type="GO" id="GO:0035800">
    <property type="term" value="F:deubiquitinase activator activity"/>
    <property type="evidence" value="ECO:0000315"/>
    <property type="project" value="UniProtKB"/>
</dbReference>
<dbReference type="GO" id="GO:0060090">
    <property type="term" value="F:molecular adaptor activity"/>
    <property type="evidence" value="ECO:0000314"/>
    <property type="project" value="UniProt"/>
</dbReference>
<dbReference type="GO" id="GO:0140678">
    <property type="term" value="F:molecular function inhibitor activity"/>
    <property type="evidence" value="ECO:0007669"/>
    <property type="project" value="Ensembl"/>
</dbReference>
<dbReference type="GO" id="GO:0031625">
    <property type="term" value="F:ubiquitin protein ligase binding"/>
    <property type="evidence" value="ECO:0000353"/>
    <property type="project" value="UniProtKB"/>
</dbReference>
<dbReference type="GO" id="GO:0008270">
    <property type="term" value="F:zinc ion binding"/>
    <property type="evidence" value="ECO:0007669"/>
    <property type="project" value="UniProtKB-KW"/>
</dbReference>
<dbReference type="GO" id="GO:0071347">
    <property type="term" value="P:cellular response to interleukin-1"/>
    <property type="evidence" value="ECO:0000315"/>
    <property type="project" value="UniProtKB"/>
</dbReference>
<dbReference type="GO" id="GO:0071479">
    <property type="term" value="P:cellular response to ionizing radiation"/>
    <property type="evidence" value="ECO:0000315"/>
    <property type="project" value="UniProtKB"/>
</dbReference>
<dbReference type="GO" id="GO:0071356">
    <property type="term" value="P:cellular response to tumor necrosis factor"/>
    <property type="evidence" value="ECO:0000315"/>
    <property type="project" value="UniProtKB"/>
</dbReference>
<dbReference type="GO" id="GO:0051607">
    <property type="term" value="P:defense response to virus"/>
    <property type="evidence" value="ECO:0000303"/>
    <property type="project" value="ComplexPortal"/>
</dbReference>
<dbReference type="GO" id="GO:0006974">
    <property type="term" value="P:DNA damage response"/>
    <property type="evidence" value="ECO:0000315"/>
    <property type="project" value="UniProtKB"/>
</dbReference>
<dbReference type="GO" id="GO:0043124">
    <property type="term" value="P:negative regulation of canonical NF-kappaB signal transduction"/>
    <property type="evidence" value="ECO:0000315"/>
    <property type="project" value="UniProtKB"/>
</dbReference>
<dbReference type="GO" id="GO:0010804">
    <property type="term" value="P:negative regulation of tumor necrosis factor-mediated signaling pathway"/>
    <property type="evidence" value="ECO:0007669"/>
    <property type="project" value="Ensembl"/>
</dbReference>
<dbReference type="GO" id="GO:1903003">
    <property type="term" value="P:positive regulation of protein deubiquitination"/>
    <property type="evidence" value="ECO:0000315"/>
    <property type="project" value="UniProtKB"/>
</dbReference>
<dbReference type="GO" id="GO:0032481">
    <property type="term" value="P:positive regulation of type I interferon production"/>
    <property type="evidence" value="ECO:0000314"/>
    <property type="project" value="UniProt"/>
</dbReference>
<dbReference type="GO" id="GO:2000158">
    <property type="term" value="P:positive regulation of ubiquitin-specific protease activity"/>
    <property type="evidence" value="ECO:0000315"/>
    <property type="project" value="UniProtKB"/>
</dbReference>
<dbReference type="GO" id="GO:0007165">
    <property type="term" value="P:signal transduction"/>
    <property type="evidence" value="ECO:0000304"/>
    <property type="project" value="ProtInc"/>
</dbReference>
<dbReference type="GO" id="GO:0060337">
    <property type="term" value="P:type I interferon-mediated signaling pathway"/>
    <property type="evidence" value="ECO:0000303"/>
    <property type="project" value="ComplexPortal"/>
</dbReference>
<dbReference type="InterPro" id="IPR041641">
    <property type="entry name" value="CALCOCO1/2_Zn_UBZ1"/>
</dbReference>
<dbReference type="InterPro" id="IPR039669">
    <property type="entry name" value="TANK"/>
</dbReference>
<dbReference type="InterPro" id="IPR024581">
    <property type="entry name" value="TBD"/>
</dbReference>
<dbReference type="PANTHER" id="PTHR15249">
    <property type="entry name" value="TRAF FAMILY MEMBER-ASSOCIATED NF-KAPPA-B ACTIVATOR"/>
    <property type="match status" value="1"/>
</dbReference>
<dbReference type="PANTHER" id="PTHR15249:SF0">
    <property type="entry name" value="TRAF FAMILY MEMBER-ASSOCIATED NF-KAPPA-B ACTIVATOR"/>
    <property type="match status" value="1"/>
</dbReference>
<dbReference type="Pfam" id="PF12845">
    <property type="entry name" value="TBD"/>
    <property type="match status" value="1"/>
</dbReference>
<dbReference type="PROSITE" id="PS51905">
    <property type="entry name" value="ZF_UBZ1"/>
    <property type="match status" value="1"/>
</dbReference>
<gene>
    <name type="primary">TANK</name>
    <name type="synonym">ITRAF</name>
    <name type="synonym">TRAF2</name>
</gene>
<protein>
    <recommendedName>
        <fullName>TRAF family member-associated NF-kappa-B activator</fullName>
    </recommendedName>
    <alternativeName>
        <fullName>TRAF-interacting protein</fullName>
        <shortName>I-TRAF</shortName>
    </alternativeName>
</protein>
<keyword id="KW-0002">3D-structure</keyword>
<keyword id="KW-0007">Acetylation</keyword>
<keyword id="KW-0025">Alternative splicing</keyword>
<keyword id="KW-0175">Coiled coil</keyword>
<keyword id="KW-0963">Cytoplasm</keyword>
<keyword id="KW-0227">DNA damage</keyword>
<keyword id="KW-0945">Host-virus interaction</keyword>
<keyword id="KW-0479">Metal-binding</keyword>
<keyword id="KW-0597">Phosphoprotein</keyword>
<keyword id="KW-1267">Proteomics identification</keyword>
<keyword id="KW-1185">Reference proteome</keyword>
<keyword id="KW-0862">Zinc</keyword>
<keyword id="KW-0863">Zinc-finger</keyword>
<organism>
    <name type="scientific">Homo sapiens</name>
    <name type="common">Human</name>
    <dbReference type="NCBI Taxonomy" id="9606"/>
    <lineage>
        <taxon>Eukaryota</taxon>
        <taxon>Metazoa</taxon>
        <taxon>Chordata</taxon>
        <taxon>Craniata</taxon>
        <taxon>Vertebrata</taxon>
        <taxon>Euteleostomi</taxon>
        <taxon>Mammalia</taxon>
        <taxon>Eutheria</taxon>
        <taxon>Euarchontoglires</taxon>
        <taxon>Primates</taxon>
        <taxon>Haplorrhini</taxon>
        <taxon>Catarrhini</taxon>
        <taxon>Hominidae</taxon>
        <taxon>Homo</taxon>
    </lineage>
</organism>
<comment type="function">
    <text evidence="7 10 11">Adapter protein involved in I-kappa-B-kinase (IKK) regulation which constitutively binds TBK1 and IKBKE playing a role in antiviral innate immunity. Acts as a regulator of TRAF function by maintaining them in a latent state. Blocks TRAF2 binding to LMP1 and inhibits LMP1-mediated NF-kappa-B activation. Negatively regulates NF-kappaB signaling and cell survival upon DNA damage (PubMed:25861989). Plays a role as an adapter to assemble ZC3H12A, USP10 in a deubiquitination complex which plays a negative feedback response to attenuate NF-kappaB activation through the deubiquitination of IKBKG or TRAF6 in response to interleukin-1-beta (IL1B) stimulation or upon DNA damage (PubMed:25861989). Promotes UBP10-induced deubiquitination of TRAF6 in response to DNA damage (PubMed:25861989). May control negatively TRAF2-mediated NF-kappa-B activation signaled by CD40, TNFR1 and TNFR2.</text>
</comment>
<comment type="subunit">
    <text evidence="4 5 6 7 8 10 11 15">Homodimer. Found in a deubiquitination complex with TANK, USP10 and ZC3H12A; this complex inhibits genotoxic stress- or interleukin-1-beta-mediated NF-kappaB activation by promoting IKBKG or TRAF6 deubiquitination (PubMed:25861989). Interacts with IKBKG; this interaction increases in response to DNA damage (PubMed:25861989). Interacts with TRAF6; this interaction increases in response to DNA damage and recruits USP10 to the ubiquitinated TRAF6 (PubMed:25861989). Interacts with USP10; this interaction increases in response to DNA damage (PubMed:25861989). Interacts with ZC3H12A; this interaction increases in response to DNA damage (PubMed:25861989). Interacts with TBK1 (PubMed:10581243, PubMed:21931631, PubMed:29251827). Interacts with IKBKE (PubMed:17568778). Also interacts with TRAF1, TRAF2, and TRAF3 by binding to their TRAF-C domains; the interaction with TRAF2 is disrupted by the phosphorylation of TANK by IKBKE (PubMed:10759890, PubMed:12005438). Interacts more strongly with TRAF1 and TRAF2 than TRAF3 (PubMed:10759890, PubMed:12005438). Interacts with IKBKG; the interaction is enhanced by IKBKE and TBK1 (PubMed:12133833). Part of a ternary complex consisting of TANK, IKBKB and IKBKG (PubMed:12133833).</text>
</comment>
<comment type="subunit">
    <text evidence="9">(Microbial infection) Interacts with vaccinia virus protein C6 (PubMed:21931555).</text>
</comment>
<comment type="subunit">
    <text evidence="14">(Microbial infection) Interacts with Seneca Valley virus protease 3C; this interaction allows the cleavage of TANK and subsequent suppression of host innate immunity.</text>
</comment>
<comment type="interaction">
    <interactant intactId="EBI-356349">
        <id>Q92844</id>
    </interactant>
    <interactant intactId="EBI-6115839">
        <id>O96018</id>
        <label>APBA3</label>
    </interactant>
    <organismsDiffer>false</organismsDiffer>
    <experiments>2</experiments>
</comment>
<comment type="interaction">
    <interactant intactId="EBI-356349">
        <id>Q92844</id>
    </interactant>
    <interactant intactId="EBI-741977">
        <id>Q96MT8</id>
        <label>CEP63</label>
    </interactant>
    <organismsDiffer>false</organismsDiffer>
    <experiments>4</experiments>
</comment>
<comment type="interaction">
    <interactant intactId="EBI-356349">
        <id>Q92844</id>
    </interactant>
    <interactant intactId="EBI-466029">
        <id>P42858</id>
        <label>HTT</label>
    </interactant>
    <organismsDiffer>false</organismsDiffer>
    <experiments>3</experiments>
</comment>
<comment type="interaction">
    <interactant intactId="EBI-356349">
        <id>Q92844</id>
    </interactant>
    <interactant intactId="EBI-307369">
        <id>Q14164</id>
        <label>IKBKE</label>
    </interactant>
    <organismsDiffer>false</organismsDiffer>
    <experiments>5</experiments>
</comment>
<comment type="interaction">
    <interactant intactId="EBI-356349">
        <id>Q92844</id>
    </interactant>
    <interactant intactId="EBI-81279">
        <id>Q9Y6K9</id>
        <label>IKBKG</label>
    </interactant>
    <organismsDiffer>false</organismsDiffer>
    <experiments>6</experiments>
</comment>
<comment type="interaction">
    <interactant intactId="EBI-356349">
        <id>Q92844</id>
    </interactant>
    <interactant intactId="EBI-476768">
        <id>P53350</id>
        <label>PLK1</label>
    </interactant>
    <organismsDiffer>false</organismsDiffer>
    <experiments>4</experiments>
</comment>
<comment type="interaction">
    <interactant intactId="EBI-356349">
        <id>Q92844</id>
    </interactant>
    <interactant intactId="EBI-1051785">
        <id>Q05519</id>
        <label>SRSF11</label>
    </interactant>
    <organismsDiffer>false</organismsDiffer>
    <experiments>3</experiments>
</comment>
<comment type="interaction">
    <interactant intactId="EBI-356349">
        <id>Q92844</id>
    </interactant>
    <interactant intactId="EBI-80140">
        <id>P63165</id>
        <label>SUMO1</label>
    </interactant>
    <organismsDiffer>false</organismsDiffer>
    <experiments>8</experiments>
</comment>
<comment type="interaction">
    <interactant intactId="EBI-356349">
        <id>Q92844</id>
    </interactant>
    <interactant intactId="EBI-473220">
        <id>P61956</id>
        <label>SUMO2</label>
    </interactant>
    <organismsDiffer>false</organismsDiffer>
    <experiments>3</experiments>
</comment>
<comment type="interaction">
    <interactant intactId="EBI-356349">
        <id>Q92844</id>
    </interactant>
    <interactant intactId="EBI-356402">
        <id>Q9UHD2</id>
        <label>TBK1</label>
    </interactant>
    <organismsDiffer>false</organismsDiffer>
    <experiments>14</experiments>
</comment>
<comment type="interaction">
    <interactant intactId="EBI-356349">
        <id>Q92844</id>
    </interactant>
    <interactant intactId="EBI-10175039">
        <id>Q13625-3</id>
        <label>TP53BP2</label>
    </interactant>
    <organismsDiffer>false</organismsDiffer>
    <experiments>3</experiments>
</comment>
<comment type="interaction">
    <interactant intactId="EBI-356349">
        <id>Q92844</id>
    </interactant>
    <interactant intactId="EBI-359224">
        <id>Q13077</id>
        <label>TRAF1</label>
    </interactant>
    <organismsDiffer>false</organismsDiffer>
    <experiments>5</experiments>
</comment>
<comment type="interaction">
    <interactant intactId="EBI-356349">
        <id>Q92844</id>
    </interactant>
    <interactant intactId="EBI-355744">
        <id>Q12933</id>
        <label>TRAF2</label>
    </interactant>
    <organismsDiffer>false</organismsDiffer>
    <experiments>10</experiments>
</comment>
<comment type="interaction">
    <interactant intactId="EBI-356349">
        <id>Q92844</id>
    </interactant>
    <interactant intactId="EBI-357631">
        <id>Q13114</id>
        <label>TRAF3</label>
    </interactant>
    <organismsDiffer>false</organismsDiffer>
    <experiments>8</experiments>
</comment>
<comment type="interaction">
    <interactant intactId="EBI-356349">
        <id>Q92844</id>
    </interactant>
    <interactant intactId="EBI-1047085">
        <id>Q92574</id>
        <label>TSC1</label>
    </interactant>
    <organismsDiffer>false</organismsDiffer>
    <experiments>3</experiments>
</comment>
<comment type="interaction">
    <interactant intactId="EBI-356349">
        <id>Q92844</id>
    </interactant>
    <interactant intactId="EBI-2548993">
        <id>P03495</id>
        <label>NS</label>
    </interactant>
    <organismsDiffer>true</organismsDiffer>
    <experiments>2</experiments>
</comment>
<comment type="interaction">
    <interactant intactId="EBI-356349">
        <id>Q92844</id>
    </interactant>
    <interactant intactId="EBI-9519257">
        <id>P17362</id>
        <label>OPG029</label>
    </interactant>
    <organismsDiffer>true</organismsDiffer>
    <experiments>2</experiments>
</comment>
<comment type="interaction">
    <interactant intactId="EBI-25967460">
        <id>Q92844-3</id>
    </interactant>
    <interactant intactId="EBI-466029">
        <id>P42858</id>
        <label>HTT</label>
    </interactant>
    <organismsDiffer>false</organismsDiffer>
    <experiments>3</experiments>
</comment>
<comment type="subcellular location">
    <subcellularLocation>
        <location>Cytoplasm</location>
    </subcellularLocation>
</comment>
<comment type="alternative products">
    <event type="alternative splicing"/>
    <isoform>
        <id>Q92844-1</id>
        <name>Long</name>
        <sequence type="displayed"/>
    </isoform>
    <isoform>
        <id>Q92844-2</id>
        <name>Short</name>
        <sequence type="described" ref="VSP_004442 VSP_004443"/>
    </isoform>
    <isoform>
        <id>Q92844-3</id>
        <name>3</name>
        <sequence type="described" ref="VSP_043702 VSP_043703"/>
    </isoform>
</comment>
<comment type="tissue specificity">
    <text>Ubiquitous.</text>
</comment>
<comment type="PTM">
    <text evidence="5">Phosphorylated by IKBKE.</text>
</comment>
<comment type="PTM">
    <text evidence="12 13">(Microbial infection) Cleaved by encephalomyocarditis virus (EMCV) protease 3C (PubMed:26363073). This cleavage allows the virus to disrupt the TANK-TBK1-IKKepsilon-IRF3 complex, thereby inhibiting the induction of the IFN-beta signal pathway (PubMed:28487378).</text>
</comment>
<comment type="PTM">
    <text evidence="14">(Microbial infection) Cleaved by Seneca Valley virus protease 3C allowing the virus to suppress interferon type-I through both RIG-I and Toll-like receptor-dependent pathways.</text>
</comment>